<proteinExistence type="evidence at protein level"/>
<comment type="function">
    <text>Component of the rigid cuticle of the spider.</text>
</comment>
<comment type="mass spectrometry"/>
<sequence>NPFLTSSVVNTGSSISAKTQDGIGNYAFNYGTANNARAEIGDAAGNKQGSYTITDVDGRARRVDYVADAAGFRASVKTNEPGTALSAPASAAIVSPYAPPVAPVAPAVAAPALAAAPLLAAPGIASYSTLIGHGAPLGYPLGAGLLAPGFAKTYVW</sequence>
<evidence type="ECO:0000255" key="1">
    <source>
        <dbReference type="PROSITE-ProRule" id="PRU00497"/>
    </source>
</evidence>
<evidence type="ECO:0000269" key="2">
    <source>
    </source>
</evidence>
<keyword id="KW-0193">Cuticle</keyword>
<keyword id="KW-0903">Direct protein sequencing</keyword>
<protein>
    <recommendedName>
        <fullName>Adult-specific rigid cuticular protein 15.5</fullName>
        <shortName>ACP 15.5</shortName>
    </recommendedName>
</protein>
<feature type="chain" id="PRO_0000196148" description="Adult-specific rigid cuticular protein 15.5">
    <location>
        <begin position="1"/>
        <end position="156"/>
    </location>
</feature>
<feature type="domain" description="Chitin-binding type R&amp;R" evidence="1">
    <location>
        <begin position="23"/>
        <end position="84"/>
    </location>
</feature>
<accession>P80518</accession>
<name>CU55_ARADI</name>
<reference key="1">
    <citation type="journal article" date="1996" name="Insect Biochem. Mol. Biol.">
        <title>Purification and characterization of five cuticular proteins from the spider Araneus diadematus.</title>
        <authorList>
            <person name="Norup T."/>
            <person name="Berg T."/>
            <person name="Stenholm H."/>
            <person name="Andersen S.O."/>
            <person name="Hoejrup P."/>
        </authorList>
    </citation>
    <scope>PROTEIN SEQUENCE</scope>
    <scope>MASS SPECTROMETRY</scope>
    <source>
        <tissue>Cuticle</tissue>
    </source>
</reference>
<organism>
    <name type="scientific">Araneus diadematus</name>
    <name type="common">European garden spider</name>
    <name type="synonym">Cross spider</name>
    <dbReference type="NCBI Taxonomy" id="45920"/>
    <lineage>
        <taxon>Eukaryota</taxon>
        <taxon>Metazoa</taxon>
        <taxon>Ecdysozoa</taxon>
        <taxon>Arthropoda</taxon>
        <taxon>Chelicerata</taxon>
        <taxon>Arachnida</taxon>
        <taxon>Araneae</taxon>
        <taxon>Araneomorphae</taxon>
        <taxon>Entelegynae</taxon>
        <taxon>Araneoidea</taxon>
        <taxon>Araneidae</taxon>
        <taxon>Araneus</taxon>
    </lineage>
</organism>
<dbReference type="GO" id="GO:0062129">
    <property type="term" value="C:chitin-based extracellular matrix"/>
    <property type="evidence" value="ECO:0007669"/>
    <property type="project" value="TreeGrafter"/>
</dbReference>
<dbReference type="GO" id="GO:0008010">
    <property type="term" value="F:structural constituent of chitin-based larval cuticle"/>
    <property type="evidence" value="ECO:0007669"/>
    <property type="project" value="TreeGrafter"/>
</dbReference>
<dbReference type="InterPro" id="IPR031311">
    <property type="entry name" value="CHIT_BIND_RR_consensus"/>
</dbReference>
<dbReference type="InterPro" id="IPR050468">
    <property type="entry name" value="Cuticle_Struct_Prot"/>
</dbReference>
<dbReference type="InterPro" id="IPR000618">
    <property type="entry name" value="Insect_cuticle"/>
</dbReference>
<dbReference type="PANTHER" id="PTHR10380">
    <property type="entry name" value="CUTICLE PROTEIN"/>
    <property type="match status" value="1"/>
</dbReference>
<dbReference type="PANTHER" id="PTHR10380:SF173">
    <property type="entry name" value="CUTICULAR PROTEIN 47EF, ISOFORM C-RELATED"/>
    <property type="match status" value="1"/>
</dbReference>
<dbReference type="Pfam" id="PF00379">
    <property type="entry name" value="Chitin_bind_4"/>
    <property type="match status" value="1"/>
</dbReference>
<dbReference type="PRINTS" id="PR00947">
    <property type="entry name" value="CUTICLE"/>
</dbReference>
<dbReference type="PROSITE" id="PS00233">
    <property type="entry name" value="CHIT_BIND_RR_1"/>
    <property type="match status" value="1"/>
</dbReference>
<dbReference type="PROSITE" id="PS51155">
    <property type="entry name" value="CHIT_BIND_RR_2"/>
    <property type="match status" value="1"/>
</dbReference>